<feature type="chain" id="PRO_1000005491" description="Large ribosomal subunit protein uL10">
    <location>
        <begin position="1"/>
        <end position="167"/>
    </location>
</feature>
<name>RL10_DICNV</name>
<dbReference type="EMBL" id="CP000513">
    <property type="protein sequence ID" value="ABQ13577.1"/>
    <property type="molecule type" value="Genomic_DNA"/>
</dbReference>
<dbReference type="RefSeq" id="WP_012031579.1">
    <property type="nucleotide sequence ID" value="NC_009446.1"/>
</dbReference>
<dbReference type="SMR" id="A5EX72"/>
<dbReference type="STRING" id="246195.DNO_1284"/>
<dbReference type="KEGG" id="dno:DNO_1284"/>
<dbReference type="eggNOG" id="COG0244">
    <property type="taxonomic scope" value="Bacteria"/>
</dbReference>
<dbReference type="HOGENOM" id="CLU_092227_0_1_6"/>
<dbReference type="OrthoDB" id="9808307at2"/>
<dbReference type="Proteomes" id="UP000000248">
    <property type="component" value="Chromosome"/>
</dbReference>
<dbReference type="GO" id="GO:1990904">
    <property type="term" value="C:ribonucleoprotein complex"/>
    <property type="evidence" value="ECO:0007669"/>
    <property type="project" value="UniProtKB-KW"/>
</dbReference>
<dbReference type="GO" id="GO:0005840">
    <property type="term" value="C:ribosome"/>
    <property type="evidence" value="ECO:0007669"/>
    <property type="project" value="UniProtKB-KW"/>
</dbReference>
<dbReference type="GO" id="GO:0070180">
    <property type="term" value="F:large ribosomal subunit rRNA binding"/>
    <property type="evidence" value="ECO:0007669"/>
    <property type="project" value="UniProtKB-UniRule"/>
</dbReference>
<dbReference type="GO" id="GO:0006412">
    <property type="term" value="P:translation"/>
    <property type="evidence" value="ECO:0007669"/>
    <property type="project" value="UniProtKB-UniRule"/>
</dbReference>
<dbReference type="CDD" id="cd05797">
    <property type="entry name" value="Ribosomal_L10"/>
    <property type="match status" value="1"/>
</dbReference>
<dbReference type="Gene3D" id="3.30.70.1730">
    <property type="match status" value="1"/>
</dbReference>
<dbReference type="Gene3D" id="6.10.250.2350">
    <property type="match status" value="1"/>
</dbReference>
<dbReference type="HAMAP" id="MF_00362">
    <property type="entry name" value="Ribosomal_uL10"/>
    <property type="match status" value="1"/>
</dbReference>
<dbReference type="InterPro" id="IPR001790">
    <property type="entry name" value="Ribosomal_uL10"/>
</dbReference>
<dbReference type="InterPro" id="IPR043141">
    <property type="entry name" value="Ribosomal_uL10-like_sf"/>
</dbReference>
<dbReference type="InterPro" id="IPR022973">
    <property type="entry name" value="Ribosomal_uL10_bac"/>
</dbReference>
<dbReference type="InterPro" id="IPR047865">
    <property type="entry name" value="Ribosomal_uL10_bac_type"/>
</dbReference>
<dbReference type="NCBIfam" id="NF000955">
    <property type="entry name" value="PRK00099.1-1"/>
    <property type="match status" value="1"/>
</dbReference>
<dbReference type="PANTHER" id="PTHR11560">
    <property type="entry name" value="39S RIBOSOMAL PROTEIN L10, MITOCHONDRIAL"/>
    <property type="match status" value="1"/>
</dbReference>
<dbReference type="Pfam" id="PF00466">
    <property type="entry name" value="Ribosomal_L10"/>
    <property type="match status" value="1"/>
</dbReference>
<dbReference type="SUPFAM" id="SSF160369">
    <property type="entry name" value="Ribosomal protein L10-like"/>
    <property type="match status" value="1"/>
</dbReference>
<reference key="1">
    <citation type="journal article" date="2007" name="Nat. Biotechnol.">
        <title>Genome sequence and identification of candidate vaccine antigens from the animal pathogen Dichelobacter nodosus.</title>
        <authorList>
            <person name="Myers G.S.A."/>
            <person name="Parker D."/>
            <person name="Al-Hasani K."/>
            <person name="Kennan R.M."/>
            <person name="Seemann T."/>
            <person name="Ren Q."/>
            <person name="Badger J.H."/>
            <person name="Selengut J.D."/>
            <person name="Deboy R.T."/>
            <person name="Tettelin H."/>
            <person name="Boyce J.D."/>
            <person name="McCarl V.P."/>
            <person name="Han X."/>
            <person name="Nelson W.C."/>
            <person name="Madupu R."/>
            <person name="Mohamoud Y."/>
            <person name="Holley T."/>
            <person name="Fedorova N."/>
            <person name="Khouri H."/>
            <person name="Bottomley S.P."/>
            <person name="Whittington R.J."/>
            <person name="Adler B."/>
            <person name="Songer J.G."/>
            <person name="Rood J.I."/>
            <person name="Paulsen I.T."/>
        </authorList>
    </citation>
    <scope>NUCLEOTIDE SEQUENCE [LARGE SCALE GENOMIC DNA]</scope>
    <source>
        <strain>VCS1703A</strain>
    </source>
</reference>
<accession>A5EX72</accession>
<comment type="function">
    <text evidence="1">Forms part of the ribosomal stalk, playing a central role in the interaction of the ribosome with GTP-bound translation factors.</text>
</comment>
<comment type="subunit">
    <text evidence="1">Part of the ribosomal stalk of the 50S ribosomal subunit. The N-terminus interacts with L11 and the large rRNA to form the base of the stalk. The C-terminus forms an elongated spine to which L12 dimers bind in a sequential fashion forming a multimeric L10(L12)X complex.</text>
</comment>
<comment type="similarity">
    <text evidence="1">Belongs to the universal ribosomal protein uL10 family.</text>
</comment>
<gene>
    <name evidence="1" type="primary">rplJ</name>
    <name type="ordered locus">DNO_1284</name>
</gene>
<keyword id="KW-1185">Reference proteome</keyword>
<keyword id="KW-0687">Ribonucleoprotein</keyword>
<keyword id="KW-0689">Ribosomal protein</keyword>
<keyword id="KW-0694">RNA-binding</keyword>
<keyword id="KW-0699">rRNA-binding</keyword>
<sequence>MGLNLTSKQEIVAEIADVASKAYSLVAAEYHGLTVAHLTQLHARARENGVYLRVVKNTLARRALADTEFKAAEEKLVGPLVLAFSMEYPGAAARLWRDFFKENDKISTDIVKFVSISGEVLAGSEFERVAKLPTKEEGISMLMSCMLAPVAKLARTLDAVRQSKEAA</sequence>
<evidence type="ECO:0000255" key="1">
    <source>
        <dbReference type="HAMAP-Rule" id="MF_00362"/>
    </source>
</evidence>
<evidence type="ECO:0000305" key="2"/>
<organism>
    <name type="scientific">Dichelobacter nodosus (strain VCS1703A)</name>
    <dbReference type="NCBI Taxonomy" id="246195"/>
    <lineage>
        <taxon>Bacteria</taxon>
        <taxon>Pseudomonadati</taxon>
        <taxon>Pseudomonadota</taxon>
        <taxon>Gammaproteobacteria</taxon>
        <taxon>Cardiobacteriales</taxon>
        <taxon>Cardiobacteriaceae</taxon>
        <taxon>Dichelobacter</taxon>
    </lineage>
</organism>
<proteinExistence type="inferred from homology"/>
<protein>
    <recommendedName>
        <fullName evidence="1">Large ribosomal subunit protein uL10</fullName>
    </recommendedName>
    <alternativeName>
        <fullName evidence="2">50S ribosomal protein L10</fullName>
    </alternativeName>
</protein>